<evidence type="ECO:0000255" key="1">
    <source>
        <dbReference type="HAMAP-Rule" id="MF_00011"/>
    </source>
</evidence>
<keyword id="KW-0963">Cytoplasm</keyword>
<keyword id="KW-0342">GTP-binding</keyword>
<keyword id="KW-0436">Ligase</keyword>
<keyword id="KW-0460">Magnesium</keyword>
<keyword id="KW-0479">Metal-binding</keyword>
<keyword id="KW-0547">Nucleotide-binding</keyword>
<keyword id="KW-0658">Purine biosynthesis</keyword>
<keyword id="KW-1185">Reference proteome</keyword>
<dbReference type="EC" id="6.3.4.4" evidence="1"/>
<dbReference type="EMBL" id="AE010299">
    <property type="protein sequence ID" value="AAM05323.1"/>
    <property type="molecule type" value="Genomic_DNA"/>
</dbReference>
<dbReference type="RefSeq" id="WP_011021916.1">
    <property type="nucleotide sequence ID" value="NC_003552.1"/>
</dbReference>
<dbReference type="SMR" id="Q8TPJ2"/>
<dbReference type="FunCoup" id="Q8TPJ2">
    <property type="interactions" value="290"/>
</dbReference>
<dbReference type="STRING" id="188937.MA_1919"/>
<dbReference type="EnsemblBacteria" id="AAM05323">
    <property type="protein sequence ID" value="AAM05323"/>
    <property type="gene ID" value="MA_1919"/>
</dbReference>
<dbReference type="GeneID" id="1473808"/>
<dbReference type="KEGG" id="mac:MA_1919"/>
<dbReference type="HOGENOM" id="CLU_029848_0_0_2"/>
<dbReference type="InParanoid" id="Q8TPJ2"/>
<dbReference type="OrthoDB" id="372247at2157"/>
<dbReference type="PhylomeDB" id="Q8TPJ2"/>
<dbReference type="UniPathway" id="UPA00075">
    <property type="reaction ID" value="UER00335"/>
</dbReference>
<dbReference type="Proteomes" id="UP000002487">
    <property type="component" value="Chromosome"/>
</dbReference>
<dbReference type="GO" id="GO:0005737">
    <property type="term" value="C:cytoplasm"/>
    <property type="evidence" value="ECO:0000318"/>
    <property type="project" value="GO_Central"/>
</dbReference>
<dbReference type="GO" id="GO:0004019">
    <property type="term" value="F:adenylosuccinate synthase activity"/>
    <property type="evidence" value="ECO:0000318"/>
    <property type="project" value="GO_Central"/>
</dbReference>
<dbReference type="GO" id="GO:0005525">
    <property type="term" value="F:GTP binding"/>
    <property type="evidence" value="ECO:0007669"/>
    <property type="project" value="UniProtKB-UniRule"/>
</dbReference>
<dbReference type="GO" id="GO:0000287">
    <property type="term" value="F:magnesium ion binding"/>
    <property type="evidence" value="ECO:0007669"/>
    <property type="project" value="UniProtKB-UniRule"/>
</dbReference>
<dbReference type="GO" id="GO:0044208">
    <property type="term" value="P:'de novo' AMP biosynthetic process"/>
    <property type="evidence" value="ECO:0000318"/>
    <property type="project" value="GO_Central"/>
</dbReference>
<dbReference type="GO" id="GO:0046040">
    <property type="term" value="P:IMP metabolic process"/>
    <property type="evidence" value="ECO:0000318"/>
    <property type="project" value="GO_Central"/>
</dbReference>
<dbReference type="CDD" id="cd03108">
    <property type="entry name" value="AdSS"/>
    <property type="match status" value="1"/>
</dbReference>
<dbReference type="FunFam" id="1.10.300.10:FF:000001">
    <property type="entry name" value="Adenylosuccinate synthetase"/>
    <property type="match status" value="1"/>
</dbReference>
<dbReference type="FunFam" id="3.90.170.10:FF:000001">
    <property type="entry name" value="Adenylosuccinate synthetase"/>
    <property type="match status" value="1"/>
</dbReference>
<dbReference type="Gene3D" id="3.40.440.10">
    <property type="entry name" value="Adenylosuccinate Synthetase, subunit A, domain 1"/>
    <property type="match status" value="1"/>
</dbReference>
<dbReference type="Gene3D" id="1.10.300.10">
    <property type="entry name" value="Adenylosuccinate Synthetase, subunit A, domain 2"/>
    <property type="match status" value="1"/>
</dbReference>
<dbReference type="Gene3D" id="3.90.170.10">
    <property type="entry name" value="Adenylosuccinate Synthetase, subunit A, domain 3"/>
    <property type="match status" value="1"/>
</dbReference>
<dbReference type="HAMAP" id="MF_00011">
    <property type="entry name" value="Adenylosucc_synth"/>
    <property type="match status" value="1"/>
</dbReference>
<dbReference type="InterPro" id="IPR018220">
    <property type="entry name" value="Adenylosuccin_syn_GTP-bd"/>
</dbReference>
<dbReference type="InterPro" id="IPR042109">
    <property type="entry name" value="Adenylosuccinate_synth_dom1"/>
</dbReference>
<dbReference type="InterPro" id="IPR042110">
    <property type="entry name" value="Adenylosuccinate_synth_dom2"/>
</dbReference>
<dbReference type="InterPro" id="IPR042111">
    <property type="entry name" value="Adenylosuccinate_synth_dom3"/>
</dbReference>
<dbReference type="InterPro" id="IPR001114">
    <property type="entry name" value="Adenylosuccinate_synthetase"/>
</dbReference>
<dbReference type="InterPro" id="IPR027417">
    <property type="entry name" value="P-loop_NTPase"/>
</dbReference>
<dbReference type="NCBIfam" id="NF002223">
    <property type="entry name" value="PRK01117.1"/>
    <property type="match status" value="1"/>
</dbReference>
<dbReference type="NCBIfam" id="TIGR00184">
    <property type="entry name" value="purA"/>
    <property type="match status" value="1"/>
</dbReference>
<dbReference type="PANTHER" id="PTHR11846">
    <property type="entry name" value="ADENYLOSUCCINATE SYNTHETASE"/>
    <property type="match status" value="1"/>
</dbReference>
<dbReference type="PANTHER" id="PTHR11846:SF0">
    <property type="entry name" value="ADENYLOSUCCINATE SYNTHETASE"/>
    <property type="match status" value="1"/>
</dbReference>
<dbReference type="Pfam" id="PF00709">
    <property type="entry name" value="Adenylsucc_synt"/>
    <property type="match status" value="1"/>
</dbReference>
<dbReference type="SMART" id="SM00788">
    <property type="entry name" value="Adenylsucc_synt"/>
    <property type="match status" value="1"/>
</dbReference>
<dbReference type="SUPFAM" id="SSF52540">
    <property type="entry name" value="P-loop containing nucleoside triphosphate hydrolases"/>
    <property type="match status" value="1"/>
</dbReference>
<dbReference type="PROSITE" id="PS01266">
    <property type="entry name" value="ADENYLOSUCCIN_SYN_1"/>
    <property type="match status" value="1"/>
</dbReference>
<feature type="chain" id="PRO_0000095269" description="Adenylosuccinate synthetase 1">
    <location>
        <begin position="1"/>
        <end position="424"/>
    </location>
</feature>
<feature type="active site" description="Proton acceptor" evidence="1">
    <location>
        <position position="13"/>
    </location>
</feature>
<feature type="active site" description="Proton donor" evidence="1">
    <location>
        <position position="41"/>
    </location>
</feature>
<feature type="binding site" evidence="1">
    <location>
        <begin position="12"/>
        <end position="18"/>
    </location>
    <ligand>
        <name>GTP</name>
        <dbReference type="ChEBI" id="CHEBI:37565"/>
    </ligand>
</feature>
<feature type="binding site" description="in other chain" evidence="1">
    <location>
        <begin position="13"/>
        <end position="16"/>
    </location>
    <ligand>
        <name>IMP</name>
        <dbReference type="ChEBI" id="CHEBI:58053"/>
        <note>ligand shared between dimeric partners</note>
    </ligand>
</feature>
<feature type="binding site" evidence="1">
    <location>
        <position position="13"/>
    </location>
    <ligand>
        <name>Mg(2+)</name>
        <dbReference type="ChEBI" id="CHEBI:18420"/>
    </ligand>
</feature>
<feature type="binding site" description="in other chain" evidence="1">
    <location>
        <begin position="38"/>
        <end position="41"/>
    </location>
    <ligand>
        <name>IMP</name>
        <dbReference type="ChEBI" id="CHEBI:58053"/>
        <note>ligand shared between dimeric partners</note>
    </ligand>
</feature>
<feature type="binding site" evidence="1">
    <location>
        <begin position="40"/>
        <end position="42"/>
    </location>
    <ligand>
        <name>GTP</name>
        <dbReference type="ChEBI" id="CHEBI:37565"/>
    </ligand>
</feature>
<feature type="binding site" evidence="1">
    <location>
        <position position="40"/>
    </location>
    <ligand>
        <name>Mg(2+)</name>
        <dbReference type="ChEBI" id="CHEBI:18420"/>
    </ligand>
</feature>
<feature type="binding site" description="in other chain" evidence="1">
    <location>
        <position position="127"/>
    </location>
    <ligand>
        <name>IMP</name>
        <dbReference type="ChEBI" id="CHEBI:58053"/>
        <note>ligand shared between dimeric partners</note>
    </ligand>
</feature>
<feature type="binding site" evidence="1">
    <location>
        <position position="141"/>
    </location>
    <ligand>
        <name>IMP</name>
        <dbReference type="ChEBI" id="CHEBI:58053"/>
        <note>ligand shared between dimeric partners</note>
    </ligand>
</feature>
<feature type="binding site" description="in other chain" evidence="1">
    <location>
        <position position="236"/>
    </location>
    <ligand>
        <name>IMP</name>
        <dbReference type="ChEBI" id="CHEBI:58053"/>
        <note>ligand shared between dimeric partners</note>
    </ligand>
</feature>
<feature type="binding site" evidence="1">
    <location>
        <begin position="300"/>
        <end position="306"/>
    </location>
    <ligand>
        <name>substrate</name>
    </ligand>
</feature>
<feature type="binding site" description="in other chain" evidence="1">
    <location>
        <position position="304"/>
    </location>
    <ligand>
        <name>IMP</name>
        <dbReference type="ChEBI" id="CHEBI:58053"/>
        <note>ligand shared between dimeric partners</note>
    </ligand>
</feature>
<feature type="binding site" evidence="1">
    <location>
        <position position="306"/>
    </location>
    <ligand>
        <name>GTP</name>
        <dbReference type="ChEBI" id="CHEBI:37565"/>
    </ligand>
</feature>
<feature type="binding site" evidence="1">
    <location>
        <begin position="332"/>
        <end position="334"/>
    </location>
    <ligand>
        <name>GTP</name>
        <dbReference type="ChEBI" id="CHEBI:37565"/>
    </ligand>
</feature>
<feature type="binding site" evidence="1">
    <location>
        <begin position="413"/>
        <end position="415"/>
    </location>
    <ligand>
        <name>GTP</name>
        <dbReference type="ChEBI" id="CHEBI:37565"/>
    </ligand>
</feature>
<reference key="1">
    <citation type="journal article" date="2002" name="Genome Res.">
        <title>The genome of Methanosarcina acetivorans reveals extensive metabolic and physiological diversity.</title>
        <authorList>
            <person name="Galagan J.E."/>
            <person name="Nusbaum C."/>
            <person name="Roy A."/>
            <person name="Endrizzi M.G."/>
            <person name="Macdonald P."/>
            <person name="FitzHugh W."/>
            <person name="Calvo S."/>
            <person name="Engels R."/>
            <person name="Smirnov S."/>
            <person name="Atnoor D."/>
            <person name="Brown A."/>
            <person name="Allen N."/>
            <person name="Naylor J."/>
            <person name="Stange-Thomann N."/>
            <person name="DeArellano K."/>
            <person name="Johnson R."/>
            <person name="Linton L."/>
            <person name="McEwan P."/>
            <person name="McKernan K."/>
            <person name="Talamas J."/>
            <person name="Tirrell A."/>
            <person name="Ye W."/>
            <person name="Zimmer A."/>
            <person name="Barber R.D."/>
            <person name="Cann I."/>
            <person name="Graham D.E."/>
            <person name="Grahame D.A."/>
            <person name="Guss A.M."/>
            <person name="Hedderich R."/>
            <person name="Ingram-Smith C."/>
            <person name="Kuettner H.C."/>
            <person name="Krzycki J.A."/>
            <person name="Leigh J.A."/>
            <person name="Li W."/>
            <person name="Liu J."/>
            <person name="Mukhopadhyay B."/>
            <person name="Reeve J.N."/>
            <person name="Smith K."/>
            <person name="Springer T.A."/>
            <person name="Umayam L.A."/>
            <person name="White O."/>
            <person name="White R.H."/>
            <person name="de Macario E.C."/>
            <person name="Ferry J.G."/>
            <person name="Jarrell K.F."/>
            <person name="Jing H."/>
            <person name="Macario A.J.L."/>
            <person name="Paulsen I.T."/>
            <person name="Pritchett M."/>
            <person name="Sowers K.R."/>
            <person name="Swanson R.V."/>
            <person name="Zinder S.H."/>
            <person name="Lander E."/>
            <person name="Metcalf W.W."/>
            <person name="Birren B."/>
        </authorList>
    </citation>
    <scope>NUCLEOTIDE SEQUENCE [LARGE SCALE GENOMIC DNA]</scope>
    <source>
        <strain>ATCC 35395 / DSM 2834 / JCM 12185 / C2A</strain>
    </source>
</reference>
<protein>
    <recommendedName>
        <fullName evidence="1">Adenylosuccinate synthetase 1</fullName>
        <shortName evidence="1">AMPSase 1</shortName>
        <shortName evidence="1">AdSS 1</shortName>
        <ecNumber evidence="1">6.3.4.4</ecNumber>
    </recommendedName>
    <alternativeName>
        <fullName evidence="1">IMP--aspartate ligase 1</fullName>
    </alternativeName>
</protein>
<organism>
    <name type="scientific">Methanosarcina acetivorans (strain ATCC 35395 / DSM 2834 / JCM 12185 / C2A)</name>
    <dbReference type="NCBI Taxonomy" id="188937"/>
    <lineage>
        <taxon>Archaea</taxon>
        <taxon>Methanobacteriati</taxon>
        <taxon>Methanobacteriota</taxon>
        <taxon>Stenosarchaea group</taxon>
        <taxon>Methanomicrobia</taxon>
        <taxon>Methanosarcinales</taxon>
        <taxon>Methanosarcinaceae</taxon>
        <taxon>Methanosarcina</taxon>
    </lineage>
</organism>
<accession>Q8TPJ2</accession>
<proteinExistence type="inferred from homology"/>
<gene>
    <name evidence="1" type="primary">purA1</name>
    <name type="ordered locus">MA_1919</name>
</gene>
<comment type="function">
    <text evidence="1">Plays an important role in the de novo pathway of purine nucleotide biosynthesis. Catalyzes the first committed step in the biosynthesis of AMP from IMP.</text>
</comment>
<comment type="catalytic activity">
    <reaction evidence="1">
        <text>IMP + L-aspartate + GTP = N(6)-(1,2-dicarboxyethyl)-AMP + GDP + phosphate + 2 H(+)</text>
        <dbReference type="Rhea" id="RHEA:15753"/>
        <dbReference type="ChEBI" id="CHEBI:15378"/>
        <dbReference type="ChEBI" id="CHEBI:29991"/>
        <dbReference type="ChEBI" id="CHEBI:37565"/>
        <dbReference type="ChEBI" id="CHEBI:43474"/>
        <dbReference type="ChEBI" id="CHEBI:57567"/>
        <dbReference type="ChEBI" id="CHEBI:58053"/>
        <dbReference type="ChEBI" id="CHEBI:58189"/>
        <dbReference type="EC" id="6.3.4.4"/>
    </reaction>
</comment>
<comment type="cofactor">
    <cofactor evidence="1">
        <name>Mg(2+)</name>
        <dbReference type="ChEBI" id="CHEBI:18420"/>
    </cofactor>
    <text evidence="1">Binds 1 Mg(2+) ion per subunit.</text>
</comment>
<comment type="pathway">
    <text evidence="1">Purine metabolism; AMP biosynthesis via de novo pathway; AMP from IMP: step 1/2.</text>
</comment>
<comment type="subunit">
    <text evidence="1">Homodimer.</text>
</comment>
<comment type="subcellular location">
    <subcellularLocation>
        <location evidence="1">Cytoplasm</location>
    </subcellularLocation>
</comment>
<comment type="similarity">
    <text evidence="1">Belongs to the adenylosuccinate synthetase family.</text>
</comment>
<name>PURA1_METAC</name>
<sequence>MSVTVIVGAQCGDEGKGKMVDLIAQDYDLVIRFQGGDNAGHTVVNQYGTFKMHLIPCGIFNQNAISLVGTGMVVNPDELQKEMKQITSAGMSVDNLKISTRANILMPYHRDLDELNEQSGGMSIGTTKRGIGPAYAGRATRTNIRFGDLAHQDYLKSHFEKVLPAINHQLSFFGAAQYTVDQLCEYCSNWYKLYNEHIVDAFTLIHNMMKENKRILFEGQLGVMKDIDLGIYPFVTSSNPIAAYAAVSSGIPARSITSVIGVAKAFSSQVGDGPFPTEVLDNCIVSLRGTGKNIDDEFGARTGRPRRLGWLDIPVLRYAHTINGFDTLAICKLDKMDSLPEIKICTSYRYQDQILSVFPDTEILGQVKAEYETLPGWECTTRGVNSFDDLPENAKSYIKRIEELVGVPVKYIGVGPARSDVIIR</sequence>